<organism evidence="13">
    <name type="scientific">Caenorhabditis elegans</name>
    <dbReference type="NCBI Taxonomy" id="6239"/>
    <lineage>
        <taxon>Eukaryota</taxon>
        <taxon>Metazoa</taxon>
        <taxon>Ecdysozoa</taxon>
        <taxon>Nematoda</taxon>
        <taxon>Chromadorea</taxon>
        <taxon>Rhabditida</taxon>
        <taxon>Rhabditina</taxon>
        <taxon>Rhabditomorpha</taxon>
        <taxon>Rhabditoidea</taxon>
        <taxon>Rhabditidae</taxon>
        <taxon>Peloderinae</taxon>
        <taxon>Caenorhabditis</taxon>
    </lineage>
</organism>
<reference evidence="13" key="1">
    <citation type="journal article" date="1998" name="Science">
        <title>Genome sequence of the nematode C. elegans: a platform for investigating biology.</title>
        <authorList>
            <consortium name="The C. elegans sequencing consortium"/>
        </authorList>
    </citation>
    <scope>NUCLEOTIDE SEQUENCE [LARGE SCALE GENOMIC DNA]</scope>
    <source>
        <strain evidence="13">Bristol N2</strain>
    </source>
</reference>
<reference evidence="12" key="2">
    <citation type="journal article" date="2010" name="Proc. Natl. Acad. Sci. U.S.A.">
        <title>A conserved tetraspanin subfamily promotes Notch signaling in Caenorhabditis elegans and in human cells.</title>
        <authorList>
            <person name="Dunn C.D."/>
            <person name="Sulis M.L."/>
            <person name="Ferrando A.A."/>
            <person name="Greenwald I."/>
        </authorList>
    </citation>
    <scope>FUNCTION</scope>
    <scope>DISRUPTION PHENOTYPE</scope>
</reference>
<reference evidence="12" key="3">
    <citation type="journal article" date="2015" name="PLoS Genet.">
        <title>Promotion of bone morphogenetic protein signaling by tetraspanins and glycosphingolipids.</title>
        <authorList>
            <person name="Liu Z."/>
            <person name="Shi H."/>
            <person name="Szymczak L.C."/>
            <person name="Aydin T."/>
            <person name="Yun S."/>
            <person name="Constas K."/>
            <person name="Schaeffer A."/>
            <person name="Ranjan S."/>
            <person name="Kubba S."/>
            <person name="Alam E."/>
            <person name="McMahon D.E."/>
            <person name="He J."/>
            <person name="Shwartz N."/>
            <person name="Tian C."/>
            <person name="Plavskin Y."/>
            <person name="Lindy A."/>
            <person name="Dad N.A."/>
            <person name="Sheth S."/>
            <person name="Amin N.M."/>
            <person name="Zimmerman S."/>
            <person name="Liu D."/>
            <person name="Schwarz E.M."/>
            <person name="Smith H."/>
            <person name="Krause M.W."/>
            <person name="Liu J."/>
        </authorList>
    </citation>
    <scope>FUNCTION</scope>
</reference>
<reference evidence="12" key="4">
    <citation type="journal article" date="2017" name="PLoS Genet.">
        <title>Two paralogous tetraspanins TSP-12 and TSP-14 function with the ADAM10 metalloprotease SUP-17 to promote BMP signaling in caenorhabditis elegans.</title>
        <authorList>
            <person name="Wang L."/>
            <person name="Liu Z."/>
            <person name="Shi H."/>
            <person name="Liu J."/>
        </authorList>
    </citation>
    <scope>FUNCTION</scope>
    <scope>DISRUPTION PHENOTYPE</scope>
</reference>
<reference key="5">
    <citation type="journal article" date="2020" name="Proc. Natl. Acad. Sci. U.S.A.">
        <title>Tetraspanins TSP-12 and TSP-14 function redundantly to regulate the trafficking of the type II BMP receptor in Caenorhabditis elegans.</title>
        <authorList>
            <person name="Liu Z."/>
            <person name="Shi H."/>
            <person name="Nzessi A.K."/>
            <person name="Norris A."/>
            <person name="Grant B.D."/>
            <person name="Liu J."/>
        </authorList>
    </citation>
    <scope>FUNCTION</scope>
    <scope>SUBCELLULAR LOCATION</scope>
    <scope>TISSUE SPECIFICITY</scope>
    <scope>DEVELOPMENTAL STAGE</scope>
    <scope>DISRUPTION PHENOTYPE</scope>
</reference>
<reference key="6">
    <citation type="journal article" date="2022" name="PLoS Genet.">
        <title>The C. elegans TspanC8 tetraspanin TSP-14 exhibits isoform-specific localization and function.</title>
        <authorList>
            <person name="Liu Z."/>
            <person name="Shi H."/>
            <person name="Liu J."/>
        </authorList>
    </citation>
    <scope>FUNCTION (ISOFORMS A AND B)</scope>
    <scope>SUBCELLULAR LOCATION (ISOFORMS A AND B)</scope>
    <scope>TISSUE SPECIFICITY (ISOFORMS A AND B)</scope>
    <scope>DEVELOPMENTAL STAGE (ISOFORMS A AND B)</scope>
    <scope>DISRUPTION PHENOTYPE (ISOFORMS A AND B)</scope>
    <scope>MUTAGENESIS OF 20-GLU--LEU-24 (ISOFORM B)</scope>
</reference>
<dbReference type="EMBL" id="BX284606">
    <property type="protein sequence ID" value="CCD70847.1"/>
    <property type="molecule type" value="Genomic_DNA"/>
</dbReference>
<dbReference type="EMBL" id="BX284606">
    <property type="protein sequence ID" value="CCD70848.1"/>
    <property type="molecule type" value="Genomic_DNA"/>
</dbReference>
<dbReference type="PIR" id="T32652">
    <property type="entry name" value="T32652"/>
</dbReference>
<dbReference type="RefSeq" id="NP_001367834.1">
    <molecule id="H2L006-1"/>
    <property type="nucleotide sequence ID" value="NM_001380953.1"/>
</dbReference>
<dbReference type="RefSeq" id="NP_001379941.1">
    <molecule id="H2L006-2"/>
    <property type="nucleotide sequence ID" value="NM_001392767.1"/>
</dbReference>
<dbReference type="RefSeq" id="NP_508828.1">
    <property type="nucleotide sequence ID" value="NM_076427.5"/>
</dbReference>
<dbReference type="RefSeq" id="NP_508829.1">
    <property type="nucleotide sequence ID" value="NM_076428.3"/>
</dbReference>
<dbReference type="SMR" id="H2L006"/>
<dbReference type="FunCoup" id="H2L006">
    <property type="interactions" value="4"/>
</dbReference>
<dbReference type="STRING" id="6239.F39C12.3b.1"/>
<dbReference type="GlyCosmos" id="H2L006">
    <property type="glycosylation" value="2 sites, No reported glycans"/>
</dbReference>
<dbReference type="PaxDb" id="6239-F39C12.3b"/>
<dbReference type="EnsemblMetazoa" id="F39C12.3a.1">
    <molecule id="H2L006-2"/>
    <property type="protein sequence ID" value="F39C12.3a.1"/>
    <property type="gene ID" value="WBGene00006640"/>
</dbReference>
<dbReference type="EnsemblMetazoa" id="F39C12.3a.2">
    <molecule id="H2L006-2"/>
    <property type="protein sequence ID" value="F39C12.3a.2"/>
    <property type="gene ID" value="WBGene00006640"/>
</dbReference>
<dbReference type="EnsemblMetazoa" id="F39C12.3a.3">
    <molecule id="H2L006-2"/>
    <property type="protein sequence ID" value="F39C12.3a.3"/>
    <property type="gene ID" value="WBGene00006640"/>
</dbReference>
<dbReference type="EnsemblMetazoa" id="F39C12.3b.1">
    <molecule id="H2L006-1"/>
    <property type="protein sequence ID" value="F39C12.3b.1"/>
    <property type="gene ID" value="WBGene00006640"/>
</dbReference>
<dbReference type="GeneID" id="180761"/>
<dbReference type="UCSC" id="F39C12.3b">
    <property type="organism name" value="c. elegans"/>
</dbReference>
<dbReference type="AGR" id="WB:WBGene00006640"/>
<dbReference type="WormBase" id="F39C12.3a">
    <molecule id="H2L006-2"/>
    <property type="protein sequence ID" value="CE10096"/>
    <property type="gene ID" value="WBGene00006640"/>
    <property type="gene designation" value="tsp-14"/>
</dbReference>
<dbReference type="WormBase" id="F39C12.3b">
    <molecule id="H2L006-1"/>
    <property type="protein sequence ID" value="CE29315"/>
    <property type="gene ID" value="WBGene00006640"/>
    <property type="gene designation" value="tsp-14"/>
</dbReference>
<dbReference type="eggNOG" id="KOG3882">
    <property type="taxonomic scope" value="Eukaryota"/>
</dbReference>
<dbReference type="InParanoid" id="H2L006"/>
<dbReference type="OMA" id="KNYHTNR"/>
<dbReference type="OrthoDB" id="2014092at2759"/>
<dbReference type="PhylomeDB" id="H2L006"/>
<dbReference type="PRO" id="PR:H2L006"/>
<dbReference type="Proteomes" id="UP000001940">
    <property type="component" value="Chromosome X"/>
</dbReference>
<dbReference type="Bgee" id="WBGene00006640">
    <property type="expression patterns" value="Expressed in pharyngeal muscle cell (C elegans) and 3 other cell types or tissues"/>
</dbReference>
<dbReference type="GO" id="GO:0016324">
    <property type="term" value="C:apical plasma membrane"/>
    <property type="evidence" value="ECO:0007669"/>
    <property type="project" value="UniProtKB-SubCell"/>
</dbReference>
<dbReference type="GO" id="GO:0016323">
    <property type="term" value="C:basolateral plasma membrane"/>
    <property type="evidence" value="ECO:0007669"/>
    <property type="project" value="UniProtKB-SubCell"/>
</dbReference>
<dbReference type="GO" id="GO:0031901">
    <property type="term" value="C:early endosome membrane"/>
    <property type="evidence" value="ECO:0007669"/>
    <property type="project" value="UniProtKB-SubCell"/>
</dbReference>
<dbReference type="GO" id="GO:0031902">
    <property type="term" value="C:late endosome membrane"/>
    <property type="evidence" value="ECO:0007669"/>
    <property type="project" value="UniProtKB-SubCell"/>
</dbReference>
<dbReference type="GO" id="GO:0005886">
    <property type="term" value="C:plasma membrane"/>
    <property type="evidence" value="ECO:0000318"/>
    <property type="project" value="GO_Central"/>
</dbReference>
<dbReference type="GO" id="GO:0055038">
    <property type="term" value="C:recycling endosome membrane"/>
    <property type="evidence" value="ECO:0007669"/>
    <property type="project" value="UniProtKB-SubCell"/>
</dbReference>
<dbReference type="GO" id="GO:0002020">
    <property type="term" value="F:protease binding"/>
    <property type="evidence" value="ECO:0000353"/>
    <property type="project" value="UniProtKB"/>
</dbReference>
<dbReference type="GO" id="GO:0045138">
    <property type="term" value="P:nematode male tail tip morphogenesis"/>
    <property type="evidence" value="ECO:0000316"/>
    <property type="project" value="UniProtKB"/>
</dbReference>
<dbReference type="GO" id="GO:0030513">
    <property type="term" value="P:positive regulation of BMP signaling pathway"/>
    <property type="evidence" value="ECO:0000316"/>
    <property type="project" value="UniProtKB"/>
</dbReference>
<dbReference type="GO" id="GO:1901046">
    <property type="term" value="P:positive regulation of egg-laying behavior"/>
    <property type="evidence" value="ECO:0000316"/>
    <property type="project" value="UniProtKB"/>
</dbReference>
<dbReference type="GO" id="GO:0040019">
    <property type="term" value="P:positive regulation of embryonic development"/>
    <property type="evidence" value="ECO:0000316"/>
    <property type="project" value="UniProtKB"/>
</dbReference>
<dbReference type="GO" id="GO:0040026">
    <property type="term" value="P:positive regulation of vulval development"/>
    <property type="evidence" value="ECO:0000316"/>
    <property type="project" value="UniProtKB"/>
</dbReference>
<dbReference type="GO" id="GO:0042661">
    <property type="term" value="P:regulation of mesodermal cell fate specification"/>
    <property type="evidence" value="ECO:0000316"/>
    <property type="project" value="UniProtKB"/>
</dbReference>
<dbReference type="Gene3D" id="1.10.1450.10">
    <property type="entry name" value="Tetraspanin"/>
    <property type="match status" value="1"/>
</dbReference>
<dbReference type="InterPro" id="IPR018499">
    <property type="entry name" value="Tetraspanin/Peripherin"/>
</dbReference>
<dbReference type="InterPro" id="IPR008952">
    <property type="entry name" value="Tetraspanin_EC2_sf"/>
</dbReference>
<dbReference type="PANTHER" id="PTHR19282">
    <property type="entry name" value="TETRASPANIN"/>
    <property type="match status" value="1"/>
</dbReference>
<dbReference type="PANTHER" id="PTHR19282:SF502">
    <property type="entry name" value="TETRASPANIN-14"/>
    <property type="match status" value="1"/>
</dbReference>
<dbReference type="Pfam" id="PF00335">
    <property type="entry name" value="Tetraspanin"/>
    <property type="match status" value="1"/>
</dbReference>
<dbReference type="PRINTS" id="PR00259">
    <property type="entry name" value="TMFOUR"/>
</dbReference>
<dbReference type="SUPFAM" id="SSF48652">
    <property type="entry name" value="Tetraspanin"/>
    <property type="match status" value="1"/>
</dbReference>
<name>TSP14_CAEEL</name>
<keyword id="KW-0025">Alternative splicing</keyword>
<keyword id="KW-1003">Cell membrane</keyword>
<keyword id="KW-0968">Cytoplasmic vesicle</keyword>
<keyword id="KW-0967">Endosome</keyword>
<keyword id="KW-0325">Glycoprotein</keyword>
<keyword id="KW-0472">Membrane</keyword>
<keyword id="KW-1185">Reference proteome</keyword>
<keyword id="KW-0812">Transmembrane</keyword>
<keyword id="KW-1133">Transmembrane helix</keyword>
<comment type="function">
    <text evidence="5 6 7 8">Functions redundantly with tsp-12 to regulate cell surface levels of the BMP type II receptor daf-4 (but not BMP type I receptor sma-6), probably by regulating endosomal sorting and recycling of receptors, preventing their targeting to degradative lysosomes (PubMed:31988138). Together with tsp-12, regulates cell fate specification in the postembryonic mesodermal M lineage, body size, male development and vulva development, probably by positively modulating BMP-like Sma/Mab signaling (PubMed:25978409, PubMed:28068334, PubMed:31988138). Together with tsp-12 involved in maintaining the structural and functional integrity of the endosomal network (PubMed:31988138). Together with tsp-12, probably acts by modulating the activation of glp-1, Notch-like receptor, to regulate germline maturation (PubMed:20220101).</text>
</comment>
<comment type="function">
    <molecule>Isoform a</molecule>
    <text evidence="9">Functions redundantly with tsp-12 to regulate cell fate specification in the postembryonic mesodermal M lineage, body size, embryonic and vulva development.</text>
</comment>
<comment type="function">
    <molecule>Isoform b</molecule>
    <text evidence="9">Functions redundantly with tsp-12 to regulate cell fate specification in the postembryonic mesodermal M lineage. Likely plays a complementary role in mesodermal development with tsp-14 isoform a, but may be more critical.</text>
</comment>
<comment type="subcellular location">
    <subcellularLocation>
        <location evidence="12">Cell membrane</location>
        <topology evidence="3">Multi-pass membrane protein</topology>
    </subcellularLocation>
    <subcellularLocation>
        <location evidence="8">Cytoplasmic vesicle membrane</location>
        <topology evidence="3">Multi-pass membrane protein</topology>
    </subcellularLocation>
    <subcellularLocation>
        <location evidence="8">Endosome membrane</location>
        <topology evidence="3">Multi-pass membrane protein</topology>
    </subcellularLocation>
    <subcellularLocation>
        <location evidence="8">Early endosome membrane</location>
        <topology evidence="3">Multi-pass membrane protein</topology>
    </subcellularLocation>
    <subcellularLocation>
        <location evidence="8">Late endosome membrane</location>
        <topology evidence="3">Multi-pass membrane protein</topology>
    </subcellularLocation>
    <subcellularLocation>
        <location evidence="8">Recycling endosome membrane</location>
        <topology evidence="3">Multi-pass membrane protein</topology>
    </subcellularLocation>
    <text evidence="10">Often in close juxtaposition to the retromer but not part of it, suggesting separate microdomains of the same endosome.</text>
</comment>
<comment type="subcellular location">
    <molecule>Isoform a</molecule>
    <subcellularLocation>
        <location evidence="12">Cell membrane</location>
        <topology evidence="3">Multi-pass membrane protein</topology>
    </subcellularLocation>
    <subcellularLocation>
        <location evidence="9">Cytoplasmic vesicle membrane</location>
        <topology evidence="3">Multi-pass membrane protein</topology>
    </subcellularLocation>
    <subcellularLocation>
        <location evidence="9">Endosome membrane</location>
        <topology evidence="3">Multi-pass membrane protein</topology>
    </subcellularLocation>
    <subcellularLocation>
        <location evidence="9">Early endosome membrane</location>
        <topology evidence="3">Multi-pass membrane protein</topology>
    </subcellularLocation>
    <subcellularLocation>
        <location evidence="9">Late endosome membrane</location>
        <topology evidence="3">Multi-pass membrane protein</topology>
    </subcellularLocation>
    <subcellularLocation>
        <location evidence="9">Apical cell membrane</location>
        <topology evidence="3">Multi-pass membrane protein</topology>
    </subcellularLocation>
    <text evidence="9">Primarily localised to intracellular vesicles.</text>
</comment>
<comment type="subcellular location">
    <molecule>Isoform b</molecule>
    <subcellularLocation>
        <location evidence="12">Cell membrane</location>
        <topology evidence="3">Multi-pass membrane protein</topology>
    </subcellularLocation>
    <subcellularLocation>
        <location evidence="9">Cytoplasmic vesicle membrane</location>
        <topology evidence="3">Multi-pass membrane protein</topology>
    </subcellularLocation>
    <subcellularLocation>
        <location evidence="9">Endosome membrane</location>
        <topology evidence="3">Multi-pass membrane protein</topology>
    </subcellularLocation>
    <subcellularLocation>
        <location evidence="11">Recycling endosome membrane</location>
        <topology evidence="3">Multi-pass membrane protein</topology>
    </subcellularLocation>
    <subcellularLocation>
        <location evidence="9">Basolateral cell membrane</location>
        <topology evidence="3">Multi-pass membrane protein</topology>
    </subcellularLocation>
    <text evidence="9">Primarily localised to the cell surface.</text>
</comment>
<comment type="alternative products">
    <event type="alternative splicing"/>
    <isoform>
        <id>H2L006-1</id>
        <name evidence="15">b</name>
        <sequence type="displayed"/>
    </isoform>
    <isoform>
        <id>H2L006-2</id>
        <name evidence="14">a</name>
        <sequence type="described" ref="VSP_059065"/>
    </isoform>
</comment>
<comment type="tissue specificity">
    <text evidence="8">Expressed in the germline, particularly in sperm cells.</text>
</comment>
<comment type="tissue specificity">
    <molecule>Isoform a</molecule>
    <text evidence="9">Expressed in the germline (particularly in sperm cells), anterior sensory cilia, hypodermis and vulva (at protein level).</text>
</comment>
<comment type="tissue specificity">
    <molecule>Isoform b</molecule>
    <text evidence="9">Expressed in the pharynx, hypodermis and vulva (at protein level).</text>
</comment>
<comment type="developmental stage">
    <text evidence="8">Expressed in anterior sensory cilia and pharynx at L3 stage, the hypodermis at L2, L3 and L4 stages, and vulva precursor cells at the L4 Christmas tree stage (at protein level).</text>
</comment>
<comment type="developmental stage">
    <molecule>Isoform a</molecule>
    <text evidence="9">Expressed in intracellular vesicles of the developing vulva, in the intestine and in hypodermal cells at larval stage L4 (at protein level).</text>
</comment>
<comment type="developmental stage">
    <molecule>Isoform b</molecule>
    <text evidence="9">Expressed in the basolateral membrane of the developing vulva, pharyngeal, intestinal cells and hypodermal cells at larval stage L4 (at protein level).</text>
</comment>
<comment type="disruption phenotype">
    <text evidence="5 7 8 9">Viable and fertile (PubMed:28068334). No effect on sup-17 localization in embryos (PubMed:28068334). No effect on tsp-12 protein levels or subcellular localization (PubMed:31988138). In a tsp-12 (ok236, ok269 or jj300) mutant background, exhibits vulva morphogenesis defects resulting in vulvaless or protruding vulva phenotype, impaired egg-laying with severe maternal effect embryonic lethality, smaller body size and reduced RAD-SMAD reporter expression, a reporter system for the sma-6/daf-4 BMP-like pathway (PubMed:28068334, PubMed:35089916). Males have severe tail defects including crumpled spicules, fused and shortened sensory rays and smaller fans (PubMed:28068334). F1 progeny die at the late embryonic stage with defects in ventral enclosure (PubMed:28068334). In a tsp-12 (ok239) mutant background, reduced daf-4 cell surface levels in hypodermal cells and mis-localization to lysosomes and lysosome-related organelles (PubMed:31988138). Altered endosomal morphology (PubMed:31988138). In a sma-9 (cc604) and tsp-12 (ok236, ok269 or jj300) mutant background, restores the production of the 2 M lineage-derived coelomocytes (PubMed:28068334, PubMed:35089916). In a glp-1 (ar202) mutant background, partially restores normal fertility (PubMed:20220101).</text>
</comment>
<comment type="disruption phenotype">
    <molecule>Isoform a</molecule>
    <text evidence="9">Viable and fertile. In a tsp-12 (ok269 or jj300) mutant background exhibits vulva morphogenesis defects resulting in vulvaless or protruding vulva phenotype, impaired egg-laying with severe maternal effect embryonic lethality and smaller body size (PubMed:35089916). In a sma-9 (cc604) and tsp-12 (ok269 or jj300) mutant background, does not restore the production of the 2 M lineage-derived coelomocytes (PubMed:35089916).</text>
</comment>
<comment type="disruption phenotype">
    <molecule>Isoform b</molecule>
    <text evidence="9">Viable and fertile. In a tsp-12 (ok269 or jj300) null mutant background exhibits normal vulva morphogenesis, no maternal effect embryonic lethality and normal body size (PubMed:35089916). In a sma-9 (cc604) and tsp-12 (ok269 or jj300) double mutant background, partially restores the production of the 2 M lineage-derived coelomocytes (PubMed:35089916).</text>
</comment>
<comment type="similarity">
    <text evidence="1 3">Belongs to the tetraspanin (TM4SF) family.</text>
</comment>
<feature type="chain" id="PRO_0000441401" description="Tetraspanin-14">
    <location>
        <begin position="1"/>
        <end position="451"/>
    </location>
</feature>
<feature type="topological domain" description="Cytoplasmic" evidence="12">
    <location>
        <begin position="1"/>
        <end position="56"/>
    </location>
</feature>
<feature type="transmembrane region" description="Helical" evidence="1">
    <location>
        <begin position="57"/>
        <end position="77"/>
    </location>
</feature>
<feature type="topological domain" description="Extracellular" evidence="12">
    <location>
        <begin position="78"/>
        <end position="96"/>
    </location>
</feature>
<feature type="transmembrane region" description="Helical" evidence="1">
    <location>
        <begin position="97"/>
        <end position="117"/>
    </location>
</feature>
<feature type="topological domain" description="Cytoplasmic" evidence="12">
    <location>
        <begin position="118"/>
        <end position="130"/>
    </location>
</feature>
<feature type="transmembrane region" description="Helical" evidence="1">
    <location>
        <begin position="131"/>
        <end position="151"/>
    </location>
</feature>
<feature type="topological domain" description="Extracellular" evidence="12">
    <location>
        <begin position="152"/>
        <end position="285"/>
    </location>
</feature>
<feature type="transmembrane region" description="Helical" evidence="1">
    <location>
        <begin position="286"/>
        <end position="306"/>
    </location>
</feature>
<feature type="topological domain" description="Cytoplasmic" evidence="12">
    <location>
        <begin position="307"/>
        <end position="451"/>
    </location>
</feature>
<feature type="region of interest" description="Disordered" evidence="4">
    <location>
        <begin position="328"/>
        <end position="451"/>
    </location>
</feature>
<feature type="short sequence motif" description="Basolateral membrane targeting" evidence="9">
    <location>
        <begin position="20"/>
        <end position="24"/>
    </location>
</feature>
<feature type="compositionally biased region" description="Pro residues" evidence="4">
    <location>
        <begin position="366"/>
        <end position="376"/>
    </location>
</feature>
<feature type="compositionally biased region" description="Low complexity" evidence="4">
    <location>
        <begin position="410"/>
        <end position="434"/>
    </location>
</feature>
<feature type="compositionally biased region" description="Polar residues" evidence="4">
    <location>
        <begin position="435"/>
        <end position="444"/>
    </location>
</feature>
<feature type="glycosylation site" description="N-linked (GlcNAc...) asparagine" evidence="2">
    <location>
        <position position="205"/>
    </location>
</feature>
<feature type="glycosylation site" description="N-linked (GlcNAc...) asparagine" evidence="2">
    <location>
        <position position="211"/>
    </location>
</feature>
<feature type="splice variant" id="VSP_059065" description="In isoform a." evidence="12">
    <location>
        <begin position="1"/>
        <end position="24"/>
    </location>
</feature>
<feature type="mutagenesis site" description="In jj368; disrupts basolateral membrane targeting and redirects to apical membranes and intracellular vesicles. Possible dominant-negative mutant. In a tsp-12 (ok239) mutant background, more severe maternal-effect embryonic lethality, smaller body size and more penetrant suppression of the sma-9(0) coelomocyte defects compared to tsp-12; tsp-14 double mutant. Significantly reduced brood size and severe embryonic lethality." evidence="9">
    <original>EQCLL</original>
    <variation>AQCAA</variation>
    <location>
        <begin position="20"/>
        <end position="24"/>
    </location>
</feature>
<evidence type="ECO:0000255" key="1"/>
<evidence type="ECO:0000255" key="2">
    <source>
        <dbReference type="PROSITE-ProRule" id="PRU00498"/>
    </source>
</evidence>
<evidence type="ECO:0000255" key="3">
    <source>
        <dbReference type="RuleBase" id="RU361218"/>
    </source>
</evidence>
<evidence type="ECO:0000256" key="4">
    <source>
        <dbReference type="SAM" id="MobiDB-lite"/>
    </source>
</evidence>
<evidence type="ECO:0000269" key="5">
    <source>
    </source>
</evidence>
<evidence type="ECO:0000269" key="6">
    <source>
    </source>
</evidence>
<evidence type="ECO:0000269" key="7">
    <source>
    </source>
</evidence>
<evidence type="ECO:0000269" key="8">
    <source>
    </source>
</evidence>
<evidence type="ECO:0000269" key="9">
    <source>
    </source>
</evidence>
<evidence type="ECO:0000303" key="10">
    <source>
    </source>
</evidence>
<evidence type="ECO:0000303" key="11">
    <source>
    </source>
</evidence>
<evidence type="ECO:0000305" key="12"/>
<evidence type="ECO:0000312" key="13">
    <source>
        <dbReference type="Proteomes" id="UP000001940"/>
    </source>
</evidence>
<evidence type="ECO:0000312" key="14">
    <source>
        <dbReference type="WormBase" id="F39C12.3a"/>
    </source>
</evidence>
<evidence type="ECO:0000312" key="15">
    <source>
        <dbReference type="WormBase" id="F39C12.3b"/>
    </source>
</evidence>
<protein>
    <recommendedName>
        <fullName evidence="12">Tetraspanin-14</fullName>
    </recommendedName>
</protein>
<proteinExistence type="evidence at protein level"/>
<accession>H2L006</accession>
<accession>O44582</accession>
<gene>
    <name evidence="15" type="primary">tsp-14</name>
    <name evidence="15" type="ORF">F39C12.3</name>
</gene>
<sequence length="451" mass="50451">MPHRAPRRFMKTAPGACDWEQCLLMGSGEPTRARAVVSSSHKQRKPRQEISACLKWLVFLLNSIVFLVGVGILALGVYLFIKDFREVKLVDIILNPAILISIFGFSICVVSFFGFMGALRDNIFLLKCFAACVFLSYILVVAVTLVFFTLFYTDTTEGLSANWLLLYAVKNYHTNRNLAEIMDALQENLECCGVSSIAQGYRDWNMSYQFNCTNSNPQPEKCGVPFSCCRKSVISEAAGSSNPLLPAMRSLECWQNALTKRPGDLEHDIYTRGCLQPLRTLFESHAVHVGAFVALLIVPVCISVCLTNILAKQVDHQRYLLEREARRNDRRRKRDHNRRDQLNSLDLLEEGKFNNASANATRPRPPDIPPPLPPIEHVPRKKSRNASSSPTRKPKSAGVENAAARRKRTATTTRTPPAAAGPAPTPQATTTNRTHQWVLQQTDLVPQKSKS</sequence>